<sequence length="411" mass="45297">MMAEIICVGTELLLGQIVNTNAQYLSQRLASLGIDLYFQTTVGDNLNRLKGAIDIALKRSDILIFTGGLGPTSDDITKEAVCEYFGKKLILNQEVLDKIEKYFKHRGVKMPEINKKQAYVPEGSIILENRHGTAPGFIIENDGKIAILLPGPPFEMQPMFEEYVVPYLEKFSKEKIYSRVLKFIGIGESSIEERLSELIHNQSDPSLALYAKPFEVELRISTKKSDEAVAKDILDQMESKIRALLGEYIYGIDNQTLEEVVVEMLMQKGLKVSVAESCTGGLICNKITNVPGASNVFDRGFITYSNEAKVKELGVSEETLKNFGAVSHEVAKQMAQGALKTSLADIAISTTGIAGPTGATETKPVGLVYIGVATKNYVDSFEFRFSGDRLRIKEAASKAALDVLRKTIINY</sequence>
<accession>A4XLD7</accession>
<protein>
    <recommendedName>
        <fullName evidence="1">Putative competence-damage inducible protein</fullName>
    </recommendedName>
</protein>
<name>CINA_CALS8</name>
<organism>
    <name type="scientific">Caldicellulosiruptor saccharolyticus (strain ATCC 43494 / DSM 8903 / Tp8T 6331)</name>
    <dbReference type="NCBI Taxonomy" id="351627"/>
    <lineage>
        <taxon>Bacteria</taxon>
        <taxon>Bacillati</taxon>
        <taxon>Bacillota</taxon>
        <taxon>Bacillota incertae sedis</taxon>
        <taxon>Caldicellulosiruptorales</taxon>
        <taxon>Caldicellulosiruptoraceae</taxon>
        <taxon>Caldicellulosiruptor</taxon>
    </lineage>
</organism>
<evidence type="ECO:0000255" key="1">
    <source>
        <dbReference type="HAMAP-Rule" id="MF_00226"/>
    </source>
</evidence>
<feature type="chain" id="PRO_1000058696" description="Putative competence-damage inducible protein">
    <location>
        <begin position="1"/>
        <end position="411"/>
    </location>
</feature>
<comment type="similarity">
    <text evidence="1">Belongs to the CinA family.</text>
</comment>
<reference key="1">
    <citation type="submission" date="2007-04" db="EMBL/GenBank/DDBJ databases">
        <title>Genome sequence of the thermophilic hydrogen-producing bacterium Caldicellulosiruptor saccharolyticus DSM 8903.</title>
        <authorList>
            <person name="Copeland A."/>
            <person name="Lucas S."/>
            <person name="Lapidus A."/>
            <person name="Barry K."/>
            <person name="Detter J.C."/>
            <person name="Glavina del Rio T."/>
            <person name="Hammon N."/>
            <person name="Israni S."/>
            <person name="Dalin E."/>
            <person name="Tice H."/>
            <person name="Pitluck S."/>
            <person name="Kiss H."/>
            <person name="Brettin T."/>
            <person name="Bruce D."/>
            <person name="Han C."/>
            <person name="Schmutz J."/>
            <person name="Larimer F."/>
            <person name="Land M."/>
            <person name="Hauser L."/>
            <person name="Kyrpides N."/>
            <person name="Lykidis A."/>
            <person name="van de Werken H.J.G."/>
            <person name="Verhaart M.R.A."/>
            <person name="VanFossen A.L."/>
            <person name="Lewis D.L."/>
            <person name="Nichols J.D."/>
            <person name="Goorissen H.P."/>
            <person name="van Niel E.W.J."/>
            <person name="Stams F.J.M."/>
            <person name="Willquist K.U."/>
            <person name="Ward D.E."/>
            <person name="van der Oost J."/>
            <person name="Kelly R.M."/>
            <person name="Kengen S.M.W."/>
            <person name="Richardson P."/>
        </authorList>
    </citation>
    <scope>NUCLEOTIDE SEQUENCE [LARGE SCALE GENOMIC DNA]</scope>
    <source>
        <strain>ATCC 43494 / DSM 8903 / Tp8T 6331</strain>
    </source>
</reference>
<dbReference type="EMBL" id="CP000679">
    <property type="protein sequence ID" value="ABP67722.1"/>
    <property type="molecule type" value="Genomic_DNA"/>
</dbReference>
<dbReference type="RefSeq" id="WP_011917653.1">
    <property type="nucleotide sequence ID" value="NC_009437.1"/>
</dbReference>
<dbReference type="SMR" id="A4XLD7"/>
<dbReference type="STRING" id="351627.Csac_2139"/>
<dbReference type="KEGG" id="csc:Csac_2139"/>
<dbReference type="eggNOG" id="COG1058">
    <property type="taxonomic scope" value="Bacteria"/>
</dbReference>
<dbReference type="eggNOG" id="COG1546">
    <property type="taxonomic scope" value="Bacteria"/>
</dbReference>
<dbReference type="HOGENOM" id="CLU_030805_9_3_9"/>
<dbReference type="OrthoDB" id="9801454at2"/>
<dbReference type="Proteomes" id="UP000000256">
    <property type="component" value="Chromosome"/>
</dbReference>
<dbReference type="CDD" id="cd00885">
    <property type="entry name" value="cinA"/>
    <property type="match status" value="1"/>
</dbReference>
<dbReference type="Gene3D" id="3.30.70.2860">
    <property type="match status" value="1"/>
</dbReference>
<dbReference type="Gene3D" id="3.90.950.20">
    <property type="entry name" value="CinA-like"/>
    <property type="match status" value="1"/>
</dbReference>
<dbReference type="Gene3D" id="3.40.980.10">
    <property type="entry name" value="MoaB/Mog-like domain"/>
    <property type="match status" value="1"/>
</dbReference>
<dbReference type="HAMAP" id="MF_00226_B">
    <property type="entry name" value="CinA_B"/>
    <property type="match status" value="1"/>
</dbReference>
<dbReference type="InterPro" id="IPR050101">
    <property type="entry name" value="CinA"/>
</dbReference>
<dbReference type="InterPro" id="IPR036653">
    <property type="entry name" value="CinA-like_C"/>
</dbReference>
<dbReference type="InterPro" id="IPR008136">
    <property type="entry name" value="CinA_C"/>
</dbReference>
<dbReference type="InterPro" id="IPR041424">
    <property type="entry name" value="CinA_KH"/>
</dbReference>
<dbReference type="InterPro" id="IPR008135">
    <property type="entry name" value="Competence-induced_CinA"/>
</dbReference>
<dbReference type="InterPro" id="IPR036425">
    <property type="entry name" value="MoaB/Mog-like_dom_sf"/>
</dbReference>
<dbReference type="InterPro" id="IPR001453">
    <property type="entry name" value="MoaB/Mog_dom"/>
</dbReference>
<dbReference type="NCBIfam" id="TIGR00200">
    <property type="entry name" value="cinA_nterm"/>
    <property type="match status" value="1"/>
</dbReference>
<dbReference type="NCBIfam" id="TIGR00177">
    <property type="entry name" value="molyb_syn"/>
    <property type="match status" value="1"/>
</dbReference>
<dbReference type="NCBIfam" id="TIGR00199">
    <property type="entry name" value="PncC_domain"/>
    <property type="match status" value="1"/>
</dbReference>
<dbReference type="NCBIfam" id="NF001813">
    <property type="entry name" value="PRK00549.1"/>
    <property type="match status" value="1"/>
</dbReference>
<dbReference type="PANTHER" id="PTHR13939">
    <property type="entry name" value="NICOTINAMIDE-NUCLEOTIDE AMIDOHYDROLASE PNCC"/>
    <property type="match status" value="1"/>
</dbReference>
<dbReference type="PANTHER" id="PTHR13939:SF0">
    <property type="entry name" value="NMN AMIDOHYDROLASE-LIKE PROTEIN YFAY"/>
    <property type="match status" value="1"/>
</dbReference>
<dbReference type="Pfam" id="PF02464">
    <property type="entry name" value="CinA"/>
    <property type="match status" value="1"/>
</dbReference>
<dbReference type="Pfam" id="PF18146">
    <property type="entry name" value="CinA_KH"/>
    <property type="match status" value="1"/>
</dbReference>
<dbReference type="Pfam" id="PF00994">
    <property type="entry name" value="MoCF_biosynth"/>
    <property type="match status" value="1"/>
</dbReference>
<dbReference type="PIRSF" id="PIRSF006728">
    <property type="entry name" value="CinA"/>
    <property type="match status" value="1"/>
</dbReference>
<dbReference type="SMART" id="SM00852">
    <property type="entry name" value="MoCF_biosynth"/>
    <property type="match status" value="1"/>
</dbReference>
<dbReference type="SUPFAM" id="SSF142433">
    <property type="entry name" value="CinA-like"/>
    <property type="match status" value="1"/>
</dbReference>
<dbReference type="SUPFAM" id="SSF53218">
    <property type="entry name" value="Molybdenum cofactor biosynthesis proteins"/>
    <property type="match status" value="1"/>
</dbReference>
<gene>
    <name evidence="1" type="primary">cinA</name>
    <name type="ordered locus">Csac_2139</name>
</gene>
<proteinExistence type="inferred from homology"/>